<keyword id="KW-0002">3D-structure</keyword>
<keyword id="KW-0025">Alternative splicing</keyword>
<keyword id="KW-0496">Mitochondrion</keyword>
<keyword id="KW-1267">Proteomics identification</keyword>
<keyword id="KW-1185">Reference proteome</keyword>
<keyword id="KW-0687">Ribonucleoprotein</keyword>
<keyword id="KW-0689">Ribosomal protein</keyword>
<keyword id="KW-0809">Transit peptide</keyword>
<protein>
    <recommendedName>
        <fullName evidence="8">Large ribosomal subunit protein bL20m</fullName>
    </recommendedName>
    <alternativeName>
        <fullName>39S ribosomal protein L20, mitochondrial</fullName>
        <shortName>L20mt</shortName>
        <shortName>MRP-L20</shortName>
    </alternativeName>
</protein>
<sequence>MVFLTAQLWLRNRVTDRYFRIQEVLKHARHFRGRKNRCYRLAVRTVIRAFVKCTKARYLKKKNMRTLWINRITAASQEHGLKYPALIGNLVKCQVELNRKVLADLAIYEPKTFKSLAALASRRRHEGFAAALGDGKEPEGIFSRVVQYH</sequence>
<reference key="1">
    <citation type="journal article" date="2001" name="J. Biol. Chem.">
        <title>Structural compensation for the deficit of rRNA with proteins in the mammalian mitochondrial ribosome. Systematic analysis of protein components of the large ribosomal subunit from mammalian mitochondria.</title>
        <authorList>
            <person name="Suzuki T."/>
            <person name="Terasaki M."/>
            <person name="Takemoto-Hori C."/>
            <person name="Hanada T."/>
            <person name="Ueda T."/>
            <person name="Wada A."/>
            <person name="Watanabe K."/>
        </authorList>
    </citation>
    <scope>NUCLEOTIDE SEQUENCE [MRNA] (ISOFORM 1)</scope>
    <scope>SUBCELLULAR LOCATION</scope>
</reference>
<reference key="2">
    <citation type="journal article" date="2004" name="Nat. Genet.">
        <title>Complete sequencing and characterization of 21,243 full-length human cDNAs.</title>
        <authorList>
            <person name="Ota T."/>
            <person name="Suzuki Y."/>
            <person name="Nishikawa T."/>
            <person name="Otsuki T."/>
            <person name="Sugiyama T."/>
            <person name="Irie R."/>
            <person name="Wakamatsu A."/>
            <person name="Hayashi K."/>
            <person name="Sato H."/>
            <person name="Nagai K."/>
            <person name="Kimura K."/>
            <person name="Makita H."/>
            <person name="Sekine M."/>
            <person name="Obayashi M."/>
            <person name="Nishi T."/>
            <person name="Shibahara T."/>
            <person name="Tanaka T."/>
            <person name="Ishii S."/>
            <person name="Yamamoto J."/>
            <person name="Saito K."/>
            <person name="Kawai Y."/>
            <person name="Isono Y."/>
            <person name="Nakamura Y."/>
            <person name="Nagahari K."/>
            <person name="Murakami K."/>
            <person name="Yasuda T."/>
            <person name="Iwayanagi T."/>
            <person name="Wagatsuma M."/>
            <person name="Shiratori A."/>
            <person name="Sudo H."/>
            <person name="Hosoiri T."/>
            <person name="Kaku Y."/>
            <person name="Kodaira H."/>
            <person name="Kondo H."/>
            <person name="Sugawara M."/>
            <person name="Takahashi M."/>
            <person name="Kanda K."/>
            <person name="Yokoi T."/>
            <person name="Furuya T."/>
            <person name="Kikkawa E."/>
            <person name="Omura Y."/>
            <person name="Abe K."/>
            <person name="Kamihara K."/>
            <person name="Katsuta N."/>
            <person name="Sato K."/>
            <person name="Tanikawa M."/>
            <person name="Yamazaki M."/>
            <person name="Ninomiya K."/>
            <person name="Ishibashi T."/>
            <person name="Yamashita H."/>
            <person name="Murakawa K."/>
            <person name="Fujimori K."/>
            <person name="Tanai H."/>
            <person name="Kimata M."/>
            <person name="Watanabe M."/>
            <person name="Hiraoka S."/>
            <person name="Chiba Y."/>
            <person name="Ishida S."/>
            <person name="Ono Y."/>
            <person name="Takiguchi S."/>
            <person name="Watanabe S."/>
            <person name="Yosida M."/>
            <person name="Hotuta T."/>
            <person name="Kusano J."/>
            <person name="Kanehori K."/>
            <person name="Takahashi-Fujii A."/>
            <person name="Hara H."/>
            <person name="Tanase T.-O."/>
            <person name="Nomura Y."/>
            <person name="Togiya S."/>
            <person name="Komai F."/>
            <person name="Hara R."/>
            <person name="Takeuchi K."/>
            <person name="Arita M."/>
            <person name="Imose N."/>
            <person name="Musashino K."/>
            <person name="Yuuki H."/>
            <person name="Oshima A."/>
            <person name="Sasaki N."/>
            <person name="Aotsuka S."/>
            <person name="Yoshikawa Y."/>
            <person name="Matsunawa H."/>
            <person name="Ichihara T."/>
            <person name="Shiohata N."/>
            <person name="Sano S."/>
            <person name="Moriya S."/>
            <person name="Momiyama H."/>
            <person name="Satoh N."/>
            <person name="Takami S."/>
            <person name="Terashima Y."/>
            <person name="Suzuki O."/>
            <person name="Nakagawa S."/>
            <person name="Senoh A."/>
            <person name="Mizoguchi H."/>
            <person name="Goto Y."/>
            <person name="Shimizu F."/>
            <person name="Wakebe H."/>
            <person name="Hishigaki H."/>
            <person name="Watanabe T."/>
            <person name="Sugiyama A."/>
            <person name="Takemoto M."/>
            <person name="Kawakami B."/>
            <person name="Yamazaki M."/>
            <person name="Watanabe K."/>
            <person name="Kumagai A."/>
            <person name="Itakura S."/>
            <person name="Fukuzumi Y."/>
            <person name="Fujimori Y."/>
            <person name="Komiyama M."/>
            <person name="Tashiro H."/>
            <person name="Tanigami A."/>
            <person name="Fujiwara T."/>
            <person name="Ono T."/>
            <person name="Yamada K."/>
            <person name="Fujii Y."/>
            <person name="Ozaki K."/>
            <person name="Hirao M."/>
            <person name="Ohmori Y."/>
            <person name="Kawabata A."/>
            <person name="Hikiji T."/>
            <person name="Kobatake N."/>
            <person name="Inagaki H."/>
            <person name="Ikema Y."/>
            <person name="Okamoto S."/>
            <person name="Okitani R."/>
            <person name="Kawakami T."/>
            <person name="Noguchi S."/>
            <person name="Itoh T."/>
            <person name="Shigeta K."/>
            <person name="Senba T."/>
            <person name="Matsumura K."/>
            <person name="Nakajima Y."/>
            <person name="Mizuno T."/>
            <person name="Morinaga M."/>
            <person name="Sasaki M."/>
            <person name="Togashi T."/>
            <person name="Oyama M."/>
            <person name="Hata H."/>
            <person name="Watanabe M."/>
            <person name="Komatsu T."/>
            <person name="Mizushima-Sugano J."/>
            <person name="Satoh T."/>
            <person name="Shirai Y."/>
            <person name="Takahashi Y."/>
            <person name="Nakagawa K."/>
            <person name="Okumura K."/>
            <person name="Nagase T."/>
            <person name="Nomura N."/>
            <person name="Kikuchi H."/>
            <person name="Masuho Y."/>
            <person name="Yamashita R."/>
            <person name="Nakai K."/>
            <person name="Yada T."/>
            <person name="Nakamura Y."/>
            <person name="Ohara O."/>
            <person name="Isogai T."/>
            <person name="Sugano S."/>
        </authorList>
    </citation>
    <scope>NUCLEOTIDE SEQUENCE [LARGE SCALE MRNA] (ISOFORMS 1 AND 2)</scope>
    <source>
        <tissue>Synovium</tissue>
        <tissue>Uterus</tissue>
    </source>
</reference>
<reference key="3">
    <citation type="journal article" date="2006" name="Nature">
        <title>The DNA sequence and biological annotation of human chromosome 1.</title>
        <authorList>
            <person name="Gregory S.G."/>
            <person name="Barlow K.F."/>
            <person name="McLay K.E."/>
            <person name="Kaul R."/>
            <person name="Swarbreck D."/>
            <person name="Dunham A."/>
            <person name="Scott C.E."/>
            <person name="Howe K.L."/>
            <person name="Woodfine K."/>
            <person name="Spencer C.C.A."/>
            <person name="Jones M.C."/>
            <person name="Gillson C."/>
            <person name="Searle S."/>
            <person name="Zhou Y."/>
            <person name="Kokocinski F."/>
            <person name="McDonald L."/>
            <person name="Evans R."/>
            <person name="Phillips K."/>
            <person name="Atkinson A."/>
            <person name="Cooper R."/>
            <person name="Jones C."/>
            <person name="Hall R.E."/>
            <person name="Andrews T.D."/>
            <person name="Lloyd C."/>
            <person name="Ainscough R."/>
            <person name="Almeida J.P."/>
            <person name="Ambrose K.D."/>
            <person name="Anderson F."/>
            <person name="Andrew R.W."/>
            <person name="Ashwell R.I.S."/>
            <person name="Aubin K."/>
            <person name="Babbage A.K."/>
            <person name="Bagguley C.L."/>
            <person name="Bailey J."/>
            <person name="Beasley H."/>
            <person name="Bethel G."/>
            <person name="Bird C.P."/>
            <person name="Bray-Allen S."/>
            <person name="Brown J.Y."/>
            <person name="Brown A.J."/>
            <person name="Buckley D."/>
            <person name="Burton J."/>
            <person name="Bye J."/>
            <person name="Carder C."/>
            <person name="Chapman J.C."/>
            <person name="Clark S.Y."/>
            <person name="Clarke G."/>
            <person name="Clee C."/>
            <person name="Cobley V."/>
            <person name="Collier R.E."/>
            <person name="Corby N."/>
            <person name="Coville G.J."/>
            <person name="Davies J."/>
            <person name="Deadman R."/>
            <person name="Dunn M."/>
            <person name="Earthrowl M."/>
            <person name="Ellington A.G."/>
            <person name="Errington H."/>
            <person name="Frankish A."/>
            <person name="Frankland J."/>
            <person name="French L."/>
            <person name="Garner P."/>
            <person name="Garnett J."/>
            <person name="Gay L."/>
            <person name="Ghori M.R.J."/>
            <person name="Gibson R."/>
            <person name="Gilby L.M."/>
            <person name="Gillett W."/>
            <person name="Glithero R.J."/>
            <person name="Grafham D.V."/>
            <person name="Griffiths C."/>
            <person name="Griffiths-Jones S."/>
            <person name="Grocock R."/>
            <person name="Hammond S."/>
            <person name="Harrison E.S.I."/>
            <person name="Hart E."/>
            <person name="Haugen E."/>
            <person name="Heath P.D."/>
            <person name="Holmes S."/>
            <person name="Holt K."/>
            <person name="Howden P.J."/>
            <person name="Hunt A.R."/>
            <person name="Hunt S.E."/>
            <person name="Hunter G."/>
            <person name="Isherwood J."/>
            <person name="James R."/>
            <person name="Johnson C."/>
            <person name="Johnson D."/>
            <person name="Joy A."/>
            <person name="Kay M."/>
            <person name="Kershaw J.K."/>
            <person name="Kibukawa M."/>
            <person name="Kimberley A.M."/>
            <person name="King A."/>
            <person name="Knights A.J."/>
            <person name="Lad H."/>
            <person name="Laird G."/>
            <person name="Lawlor S."/>
            <person name="Leongamornlert D.A."/>
            <person name="Lloyd D.M."/>
            <person name="Loveland J."/>
            <person name="Lovell J."/>
            <person name="Lush M.J."/>
            <person name="Lyne R."/>
            <person name="Martin S."/>
            <person name="Mashreghi-Mohammadi M."/>
            <person name="Matthews L."/>
            <person name="Matthews N.S.W."/>
            <person name="McLaren S."/>
            <person name="Milne S."/>
            <person name="Mistry S."/>
            <person name="Moore M.J.F."/>
            <person name="Nickerson T."/>
            <person name="O'Dell C.N."/>
            <person name="Oliver K."/>
            <person name="Palmeiri A."/>
            <person name="Palmer S.A."/>
            <person name="Parker A."/>
            <person name="Patel D."/>
            <person name="Pearce A.V."/>
            <person name="Peck A.I."/>
            <person name="Pelan S."/>
            <person name="Phelps K."/>
            <person name="Phillimore B.J."/>
            <person name="Plumb R."/>
            <person name="Rajan J."/>
            <person name="Raymond C."/>
            <person name="Rouse G."/>
            <person name="Saenphimmachak C."/>
            <person name="Sehra H.K."/>
            <person name="Sheridan E."/>
            <person name="Shownkeen R."/>
            <person name="Sims S."/>
            <person name="Skuce C.D."/>
            <person name="Smith M."/>
            <person name="Steward C."/>
            <person name="Subramanian S."/>
            <person name="Sycamore N."/>
            <person name="Tracey A."/>
            <person name="Tromans A."/>
            <person name="Van Helmond Z."/>
            <person name="Wall M."/>
            <person name="Wallis J.M."/>
            <person name="White S."/>
            <person name="Whitehead S.L."/>
            <person name="Wilkinson J.E."/>
            <person name="Willey D.L."/>
            <person name="Williams H."/>
            <person name="Wilming L."/>
            <person name="Wray P.W."/>
            <person name="Wu Z."/>
            <person name="Coulson A."/>
            <person name="Vaudin M."/>
            <person name="Sulston J.E."/>
            <person name="Durbin R.M."/>
            <person name="Hubbard T."/>
            <person name="Wooster R."/>
            <person name="Dunham I."/>
            <person name="Carter N.P."/>
            <person name="McVean G."/>
            <person name="Ross M.T."/>
            <person name="Harrow J."/>
            <person name="Olson M.V."/>
            <person name="Beck S."/>
            <person name="Rogers J."/>
            <person name="Bentley D.R."/>
        </authorList>
    </citation>
    <scope>NUCLEOTIDE SEQUENCE [LARGE SCALE GENOMIC DNA]</scope>
</reference>
<reference key="4">
    <citation type="submission" date="2005-07" db="EMBL/GenBank/DDBJ databases">
        <authorList>
            <person name="Mural R.J."/>
            <person name="Istrail S."/>
            <person name="Sutton G.G."/>
            <person name="Florea L."/>
            <person name="Halpern A.L."/>
            <person name="Mobarry C.M."/>
            <person name="Lippert R."/>
            <person name="Walenz B."/>
            <person name="Shatkay H."/>
            <person name="Dew I."/>
            <person name="Miller J.R."/>
            <person name="Flanigan M.J."/>
            <person name="Edwards N.J."/>
            <person name="Bolanos R."/>
            <person name="Fasulo D."/>
            <person name="Halldorsson B.V."/>
            <person name="Hannenhalli S."/>
            <person name="Turner R."/>
            <person name="Yooseph S."/>
            <person name="Lu F."/>
            <person name="Nusskern D.R."/>
            <person name="Shue B.C."/>
            <person name="Zheng X.H."/>
            <person name="Zhong F."/>
            <person name="Delcher A.L."/>
            <person name="Huson D.H."/>
            <person name="Kravitz S.A."/>
            <person name="Mouchard L."/>
            <person name="Reinert K."/>
            <person name="Remington K.A."/>
            <person name="Clark A.G."/>
            <person name="Waterman M.S."/>
            <person name="Eichler E.E."/>
            <person name="Adams M.D."/>
            <person name="Hunkapiller M.W."/>
            <person name="Myers E.W."/>
            <person name="Venter J.C."/>
        </authorList>
    </citation>
    <scope>NUCLEOTIDE SEQUENCE [LARGE SCALE GENOMIC DNA]</scope>
</reference>
<reference key="5">
    <citation type="journal article" date="2004" name="Genome Res.">
        <title>The status, quality, and expansion of the NIH full-length cDNA project: the Mammalian Gene Collection (MGC).</title>
        <authorList>
            <consortium name="The MGC Project Team"/>
        </authorList>
    </citation>
    <scope>NUCLEOTIDE SEQUENCE [LARGE SCALE MRNA] (ISOFORM 1)</scope>
    <source>
        <tissue>Bone marrow</tissue>
        <tissue>Lymph</tissue>
        <tissue>Mammary gland</tissue>
    </source>
</reference>
<reference key="6">
    <citation type="journal article" date="2011" name="BMC Syst. Biol.">
        <title>Initial characterization of the human central proteome.</title>
        <authorList>
            <person name="Burkard T.R."/>
            <person name="Planyavsky M."/>
            <person name="Kaupe I."/>
            <person name="Breitwieser F.P."/>
            <person name="Buerckstuemmer T."/>
            <person name="Bennett K.L."/>
            <person name="Superti-Furga G."/>
            <person name="Colinge J."/>
        </authorList>
    </citation>
    <scope>IDENTIFICATION BY MASS SPECTROMETRY [LARGE SCALE ANALYSIS]</scope>
</reference>
<reference key="7">
    <citation type="journal article" date="2015" name="Proteomics">
        <title>N-terminome analysis of the human mitochondrial proteome.</title>
        <authorList>
            <person name="Vaca Jacome A.S."/>
            <person name="Rabilloud T."/>
            <person name="Schaeffer-Reiss C."/>
            <person name="Rompais M."/>
            <person name="Ayoub D."/>
            <person name="Lane L."/>
            <person name="Bairoch A."/>
            <person name="Van Dorsselaer A."/>
            <person name="Carapito C."/>
        </authorList>
    </citation>
    <scope>IDENTIFICATION BY MASS SPECTROMETRY [LARGE SCALE ANALYSIS]</scope>
</reference>
<reference evidence="10" key="8">
    <citation type="journal article" date="2014" name="Science">
        <title>Structure of the large ribosomal subunit from human mitochondria.</title>
        <authorList>
            <person name="Brown A."/>
            <person name="Amunts A."/>
            <person name="Bai X.C."/>
            <person name="Sugimoto Y."/>
            <person name="Edwards P.C."/>
            <person name="Murshudov G."/>
            <person name="Scheres S.H."/>
            <person name="Ramakrishnan V."/>
        </authorList>
    </citation>
    <scope>STRUCTURE BY ELECTRON MICROSCOPY (3.40 ANGSTROMS)</scope>
    <scope>SUBCELLULAR LOCATION</scope>
    <scope>SUBUNIT</scope>
</reference>
<reference evidence="11" key="9">
    <citation type="journal article" date="2015" name="Science">
        <title>Ribosome. The structure of the human mitochondrial ribosome.</title>
        <authorList>
            <person name="Amunts A."/>
            <person name="Brown A."/>
            <person name="Toots J."/>
            <person name="Scheres S.H."/>
            <person name="Ramakrishnan V."/>
        </authorList>
    </citation>
    <scope>STRUCTURE BY ELECTRON MICROSCOPY (3.50 ANGSTROMS)</scope>
    <scope>SUBCELLULAR LOCATION</scope>
    <scope>SUBUNIT</scope>
</reference>
<reference evidence="12 13" key="10">
    <citation type="journal article" date="2017" name="Nat. Struct. Mol. Biol.">
        <title>Structures of the human mitochondrial ribosome in native states of assembly.</title>
        <authorList>
            <person name="Brown A."/>
            <person name="Rathore S."/>
            <person name="Kimanius D."/>
            <person name="Aibara S."/>
            <person name="Bai X.C."/>
            <person name="Rorbach J."/>
            <person name="Amunts A."/>
            <person name="Ramakrishnan V."/>
        </authorList>
    </citation>
    <scope>STRUCTURE BY ELECTRON MICROSCOPY (3.03 ANGSTROMS)</scope>
    <scope>SUBCELLULAR LOCATION</scope>
    <scope>SUBUNIT</scope>
</reference>
<reference evidence="14 15" key="11">
    <citation type="journal article" date="2022" name="Nat. Commun.">
        <title>A late-stage assembly checkpoint of the human mitochondrial ribosome large subunit.</title>
        <authorList>
            <person name="Rebelo-Guiomar P."/>
            <person name="Pellegrino S."/>
            <person name="Dent K.C."/>
            <person name="Sas-Chen A."/>
            <person name="Miller-Fleming L."/>
            <person name="Garone C."/>
            <person name="Van Haute L."/>
            <person name="Rogan J.F."/>
            <person name="Dinan A."/>
            <person name="Firth A.E."/>
            <person name="Andrews B."/>
            <person name="Whitworth A.J."/>
            <person name="Schwartz S."/>
            <person name="Warren A.J."/>
            <person name="Minczuk M."/>
        </authorList>
    </citation>
    <scope>STRUCTURE BY ELECTRON MICROSCOPY (2.9 ANGSTROMS) IN COMPLEX WITH MTLSU</scope>
    <scope>SUBUNIT</scope>
</reference>
<organism>
    <name type="scientific">Homo sapiens</name>
    <name type="common">Human</name>
    <dbReference type="NCBI Taxonomy" id="9606"/>
    <lineage>
        <taxon>Eukaryota</taxon>
        <taxon>Metazoa</taxon>
        <taxon>Chordata</taxon>
        <taxon>Craniata</taxon>
        <taxon>Vertebrata</taxon>
        <taxon>Euteleostomi</taxon>
        <taxon>Mammalia</taxon>
        <taxon>Eutheria</taxon>
        <taxon>Euarchontoglires</taxon>
        <taxon>Primates</taxon>
        <taxon>Haplorrhini</taxon>
        <taxon>Catarrhini</taxon>
        <taxon>Hominidae</taxon>
        <taxon>Homo</taxon>
    </lineage>
</organism>
<gene>
    <name type="primary">MRPL20</name>
</gene>
<proteinExistence type="evidence at protein level"/>
<comment type="subunit">
    <text evidence="1 3 4 5 6">Component of the mitochondrial large ribosomal subunit (mt-LSU) (PubMed:25838379, PubMed:28892042, PubMed:35177605). Mature mammalian 55S mitochondrial ribosomes consist of a small (28S) and a large (39S) subunit. The 28S small subunit contains a 12S ribosomal RNA (12S mt-rRNA) and 30 different proteins. The 39S large subunit contains a 16S rRNA (16S mt-rRNA), a copy of mitochondrial valine transfer RNA (mt-tRNA(Val)), which plays an integral structural role, and 52 different proteins (PubMed:25278503, PubMed:25838379). Interacts with OXA1L (By similarity).</text>
</comment>
<comment type="subcellular location">
    <subcellularLocation>
        <location evidence="2 3 4 5">Mitochondrion</location>
    </subcellularLocation>
</comment>
<comment type="alternative products">
    <event type="alternative splicing"/>
    <isoform>
        <id>Q9BYC9-1</id>
        <name>1</name>
        <sequence type="displayed"/>
    </isoform>
    <isoform>
        <id>Q9BYC9-2</id>
        <name>2</name>
        <sequence type="described" ref="VSP_056084"/>
    </isoform>
</comment>
<comment type="similarity">
    <text evidence="9">Belongs to the bacterial ribosomal protein bL20 family.</text>
</comment>
<evidence type="ECO:0000250" key="1">
    <source>
        <dbReference type="UniProtKB" id="Q2TBR2"/>
    </source>
</evidence>
<evidence type="ECO:0000269" key="2">
    <source>
    </source>
</evidence>
<evidence type="ECO:0000269" key="3">
    <source>
    </source>
</evidence>
<evidence type="ECO:0000269" key="4">
    <source>
    </source>
</evidence>
<evidence type="ECO:0000269" key="5">
    <source>
    </source>
</evidence>
<evidence type="ECO:0000269" key="6">
    <source>
    </source>
</evidence>
<evidence type="ECO:0000303" key="7">
    <source>
    </source>
</evidence>
<evidence type="ECO:0000303" key="8">
    <source>
    </source>
</evidence>
<evidence type="ECO:0000305" key="9"/>
<evidence type="ECO:0007744" key="10">
    <source>
        <dbReference type="PDB" id="3J7Y"/>
    </source>
</evidence>
<evidence type="ECO:0007744" key="11">
    <source>
        <dbReference type="PDB" id="3J9M"/>
    </source>
</evidence>
<evidence type="ECO:0007744" key="12">
    <source>
        <dbReference type="PDB" id="5OOL"/>
    </source>
</evidence>
<evidence type="ECO:0007744" key="13">
    <source>
        <dbReference type="PDB" id="5OOM"/>
    </source>
</evidence>
<evidence type="ECO:0007744" key="14">
    <source>
        <dbReference type="PDB" id="7QH6"/>
    </source>
</evidence>
<evidence type="ECO:0007744" key="15">
    <source>
        <dbReference type="PDB" id="7QH7"/>
    </source>
</evidence>
<evidence type="ECO:0007829" key="16">
    <source>
        <dbReference type="PDB" id="7OF0"/>
    </source>
</evidence>
<evidence type="ECO:0007829" key="17">
    <source>
        <dbReference type="PDB" id="7QH7"/>
    </source>
</evidence>
<evidence type="ECO:0007829" key="18">
    <source>
        <dbReference type="PDB" id="8QU1"/>
    </source>
</evidence>
<feature type="transit peptide" description="Mitochondrion" evidence="1">
    <location>
        <begin position="1"/>
        <end position="9"/>
    </location>
</feature>
<feature type="chain" id="PRO_0000248279" description="Large ribosomal subunit protein bL20m">
    <location>
        <begin position="10"/>
        <end position="149"/>
    </location>
</feature>
<feature type="splice variant" id="VSP_056084" description="In isoform 2." evidence="7">
    <original>CQVELNRKVLADLAIYEPKTFKSLAALASRRRHEGFAAALGDGKEPEGIFSRVVQYH</original>
    <variation>VWVSMWVPLKFWTSAETIMRGVVVLPVVPANQEAEARGSLETDFWAVVCYADGVSMLSVVSIW</variation>
    <location>
        <begin position="93"/>
        <end position="149"/>
    </location>
</feature>
<feature type="helix" evidence="16">
    <location>
        <begin position="17"/>
        <end position="28"/>
    </location>
</feature>
<feature type="helix" evidence="16">
    <location>
        <begin position="33"/>
        <end position="36"/>
    </location>
</feature>
<feature type="helix" evidence="16">
    <location>
        <begin position="39"/>
        <end position="77"/>
    </location>
</feature>
<feature type="turn" evidence="16">
    <location>
        <begin position="78"/>
        <end position="80"/>
    </location>
</feature>
<feature type="helix" evidence="16">
    <location>
        <begin position="83"/>
        <end position="92"/>
    </location>
</feature>
<feature type="helix" evidence="16">
    <location>
        <begin position="99"/>
        <end position="108"/>
    </location>
</feature>
<feature type="helix" evidence="16">
    <location>
        <begin position="110"/>
        <end position="124"/>
    </location>
</feature>
<feature type="strand" evidence="17">
    <location>
        <begin position="133"/>
        <end position="135"/>
    </location>
</feature>
<feature type="turn" evidence="18">
    <location>
        <begin position="141"/>
        <end position="143"/>
    </location>
</feature>
<dbReference type="EMBL" id="AB049644">
    <property type="protein sequence ID" value="BAB40849.1"/>
    <property type="molecule type" value="mRNA"/>
</dbReference>
<dbReference type="EMBL" id="AK301440">
    <property type="protein sequence ID" value="BAH13482.1"/>
    <property type="molecule type" value="mRNA"/>
</dbReference>
<dbReference type="EMBL" id="AK315794">
    <property type="protein sequence ID" value="BAG38138.1"/>
    <property type="molecule type" value="mRNA"/>
</dbReference>
<dbReference type="EMBL" id="AL391244">
    <property type="status" value="NOT_ANNOTATED_CDS"/>
    <property type="molecule type" value="Genomic_DNA"/>
</dbReference>
<dbReference type="EMBL" id="CH471183">
    <property type="protein sequence ID" value="EAW56207.1"/>
    <property type="molecule type" value="Genomic_DNA"/>
</dbReference>
<dbReference type="EMBL" id="BC009515">
    <property type="protein sequence ID" value="AAH09515.1"/>
    <property type="molecule type" value="mRNA"/>
</dbReference>
<dbReference type="EMBL" id="BC014316">
    <property type="protein sequence ID" value="AAH14316.1"/>
    <property type="molecule type" value="mRNA"/>
</dbReference>
<dbReference type="EMBL" id="BC059945">
    <property type="protein sequence ID" value="AAH59945.1"/>
    <property type="molecule type" value="mRNA"/>
</dbReference>
<dbReference type="CCDS" id="CCDS26.1">
    <molecule id="Q9BYC9-1"/>
</dbReference>
<dbReference type="RefSeq" id="NP_060441.2">
    <molecule id="Q9BYC9-1"/>
    <property type="nucleotide sequence ID" value="NM_017971.3"/>
</dbReference>
<dbReference type="PDB" id="3J7Y">
    <property type="method" value="EM"/>
    <property type="resolution" value="3.40 A"/>
    <property type="chains" value="R=1-149"/>
</dbReference>
<dbReference type="PDB" id="3J9M">
    <property type="method" value="EM"/>
    <property type="resolution" value="3.50 A"/>
    <property type="chains" value="R=1-149"/>
</dbReference>
<dbReference type="PDB" id="5OOL">
    <property type="method" value="EM"/>
    <property type="resolution" value="3.06 A"/>
    <property type="chains" value="R=1-149"/>
</dbReference>
<dbReference type="PDB" id="5OOM">
    <property type="method" value="EM"/>
    <property type="resolution" value="3.03 A"/>
    <property type="chains" value="R=1-149"/>
</dbReference>
<dbReference type="PDB" id="6I9R">
    <property type="method" value="EM"/>
    <property type="resolution" value="3.90 A"/>
    <property type="chains" value="R=1-149"/>
</dbReference>
<dbReference type="PDB" id="6NU2">
    <property type="method" value="EM"/>
    <property type="resolution" value="3.90 A"/>
    <property type="chains" value="R=10-149"/>
</dbReference>
<dbReference type="PDB" id="6NU3">
    <property type="method" value="EM"/>
    <property type="resolution" value="4.40 A"/>
    <property type="chains" value="R=1-149"/>
</dbReference>
<dbReference type="PDB" id="6VLZ">
    <property type="method" value="EM"/>
    <property type="resolution" value="2.97 A"/>
    <property type="chains" value="R=1-149"/>
</dbReference>
<dbReference type="PDB" id="6VMI">
    <property type="method" value="EM"/>
    <property type="resolution" value="2.96 A"/>
    <property type="chains" value="R=1-149"/>
</dbReference>
<dbReference type="PDB" id="6ZM5">
    <property type="method" value="EM"/>
    <property type="resolution" value="2.89 A"/>
    <property type="chains" value="R=1-149"/>
</dbReference>
<dbReference type="PDB" id="6ZM6">
    <property type="method" value="EM"/>
    <property type="resolution" value="2.59 A"/>
    <property type="chains" value="R=1-149"/>
</dbReference>
<dbReference type="PDB" id="6ZS9">
    <property type="method" value="EM"/>
    <property type="resolution" value="4.00 A"/>
    <property type="chains" value="XR=1-149"/>
</dbReference>
<dbReference type="PDB" id="6ZSA">
    <property type="method" value="EM"/>
    <property type="resolution" value="4.00 A"/>
    <property type="chains" value="XR=1-149"/>
</dbReference>
<dbReference type="PDB" id="6ZSB">
    <property type="method" value="EM"/>
    <property type="resolution" value="4.50 A"/>
    <property type="chains" value="XR=1-149"/>
</dbReference>
<dbReference type="PDB" id="6ZSC">
    <property type="method" value="EM"/>
    <property type="resolution" value="3.50 A"/>
    <property type="chains" value="XR=1-149"/>
</dbReference>
<dbReference type="PDB" id="6ZSD">
    <property type="method" value="EM"/>
    <property type="resolution" value="3.70 A"/>
    <property type="chains" value="XR=1-149"/>
</dbReference>
<dbReference type="PDB" id="6ZSE">
    <property type="method" value="EM"/>
    <property type="resolution" value="5.00 A"/>
    <property type="chains" value="XR=1-149"/>
</dbReference>
<dbReference type="PDB" id="6ZSG">
    <property type="method" value="EM"/>
    <property type="resolution" value="4.00 A"/>
    <property type="chains" value="XR=1-149"/>
</dbReference>
<dbReference type="PDB" id="7A5F">
    <property type="method" value="EM"/>
    <property type="resolution" value="4.40 A"/>
    <property type="chains" value="R3=1-149"/>
</dbReference>
<dbReference type="PDB" id="7A5G">
    <property type="method" value="EM"/>
    <property type="resolution" value="4.33 A"/>
    <property type="chains" value="R3=1-149"/>
</dbReference>
<dbReference type="PDB" id="7A5H">
    <property type="method" value="EM"/>
    <property type="resolution" value="3.30 A"/>
    <property type="chains" value="R=1-149"/>
</dbReference>
<dbReference type="PDB" id="7A5I">
    <property type="method" value="EM"/>
    <property type="resolution" value="3.70 A"/>
    <property type="chains" value="R3=1-149"/>
</dbReference>
<dbReference type="PDB" id="7A5J">
    <property type="method" value="EM"/>
    <property type="resolution" value="3.10 A"/>
    <property type="chains" value="R=1-149"/>
</dbReference>
<dbReference type="PDB" id="7A5K">
    <property type="method" value="EM"/>
    <property type="resolution" value="3.70 A"/>
    <property type="chains" value="R3=1-149"/>
</dbReference>
<dbReference type="PDB" id="7L08">
    <property type="method" value="EM"/>
    <property type="resolution" value="3.49 A"/>
    <property type="chains" value="R=1-149"/>
</dbReference>
<dbReference type="PDB" id="7L20">
    <property type="method" value="EM"/>
    <property type="resolution" value="3.15 A"/>
    <property type="chains" value="R=1-149"/>
</dbReference>
<dbReference type="PDB" id="7O9K">
    <property type="method" value="EM"/>
    <property type="resolution" value="3.10 A"/>
    <property type="chains" value="R=1-149"/>
</dbReference>
<dbReference type="PDB" id="7O9M">
    <property type="method" value="EM"/>
    <property type="resolution" value="2.50 A"/>
    <property type="chains" value="R=1-149"/>
</dbReference>
<dbReference type="PDB" id="7ODR">
    <property type="method" value="EM"/>
    <property type="resolution" value="2.90 A"/>
    <property type="chains" value="R=1-149"/>
</dbReference>
<dbReference type="PDB" id="7ODS">
    <property type="method" value="EM"/>
    <property type="resolution" value="3.10 A"/>
    <property type="chains" value="R=1-149"/>
</dbReference>
<dbReference type="PDB" id="7ODT">
    <property type="method" value="EM"/>
    <property type="resolution" value="3.10 A"/>
    <property type="chains" value="R=1-149"/>
</dbReference>
<dbReference type="PDB" id="7OF0">
    <property type="method" value="EM"/>
    <property type="resolution" value="2.20 A"/>
    <property type="chains" value="R=1-149"/>
</dbReference>
<dbReference type="PDB" id="7OF2">
    <property type="method" value="EM"/>
    <property type="resolution" value="2.70 A"/>
    <property type="chains" value="R=1-149"/>
</dbReference>
<dbReference type="PDB" id="7OF3">
    <property type="method" value="EM"/>
    <property type="resolution" value="2.70 A"/>
    <property type="chains" value="R=1-149"/>
</dbReference>
<dbReference type="PDB" id="7OF4">
    <property type="method" value="EM"/>
    <property type="resolution" value="2.70 A"/>
    <property type="chains" value="R=1-149"/>
</dbReference>
<dbReference type="PDB" id="7OF5">
    <property type="method" value="EM"/>
    <property type="resolution" value="2.90 A"/>
    <property type="chains" value="R=1-149"/>
</dbReference>
<dbReference type="PDB" id="7OF6">
    <property type="method" value="EM"/>
    <property type="resolution" value="2.60 A"/>
    <property type="chains" value="R=1-149"/>
</dbReference>
<dbReference type="PDB" id="7OF7">
    <property type="method" value="EM"/>
    <property type="resolution" value="2.50 A"/>
    <property type="chains" value="R=1-149"/>
</dbReference>
<dbReference type="PDB" id="7OG4">
    <property type="method" value="EM"/>
    <property type="resolution" value="3.80 A"/>
    <property type="chains" value="XR=1-149"/>
</dbReference>
<dbReference type="PDB" id="7OI6">
    <property type="method" value="EM"/>
    <property type="resolution" value="5.70 A"/>
    <property type="chains" value="R=1-149"/>
</dbReference>
<dbReference type="PDB" id="7OI7">
    <property type="method" value="EM"/>
    <property type="resolution" value="3.50 A"/>
    <property type="chains" value="R=1-149"/>
</dbReference>
<dbReference type="PDB" id="7OI8">
    <property type="method" value="EM"/>
    <property type="resolution" value="3.50 A"/>
    <property type="chains" value="R=1-149"/>
</dbReference>
<dbReference type="PDB" id="7OI9">
    <property type="method" value="EM"/>
    <property type="resolution" value="3.30 A"/>
    <property type="chains" value="R=1-149"/>
</dbReference>
<dbReference type="PDB" id="7OIA">
    <property type="method" value="EM"/>
    <property type="resolution" value="3.20 A"/>
    <property type="chains" value="R=1-149"/>
</dbReference>
<dbReference type="PDB" id="7OIB">
    <property type="method" value="EM"/>
    <property type="resolution" value="3.30 A"/>
    <property type="chains" value="R=1-149"/>
</dbReference>
<dbReference type="PDB" id="7OIC">
    <property type="method" value="EM"/>
    <property type="resolution" value="3.10 A"/>
    <property type="chains" value="R=1-149"/>
</dbReference>
<dbReference type="PDB" id="7OID">
    <property type="method" value="EM"/>
    <property type="resolution" value="3.70 A"/>
    <property type="chains" value="R=1-149"/>
</dbReference>
<dbReference type="PDB" id="7OIE">
    <property type="method" value="EM"/>
    <property type="resolution" value="3.50 A"/>
    <property type="chains" value="R=1-149"/>
</dbReference>
<dbReference type="PDB" id="7PD3">
    <property type="method" value="EM"/>
    <property type="resolution" value="3.40 A"/>
    <property type="chains" value="R=1-149"/>
</dbReference>
<dbReference type="PDB" id="7PO4">
    <property type="method" value="EM"/>
    <property type="resolution" value="2.56 A"/>
    <property type="chains" value="R=1-149"/>
</dbReference>
<dbReference type="PDB" id="7QH6">
    <property type="method" value="EM"/>
    <property type="resolution" value="3.08 A"/>
    <property type="chains" value="R=1-149"/>
</dbReference>
<dbReference type="PDB" id="7QH7">
    <property type="method" value="EM"/>
    <property type="resolution" value="2.89 A"/>
    <property type="chains" value="R=10-148"/>
</dbReference>
<dbReference type="PDB" id="7QI4">
    <property type="method" value="EM"/>
    <property type="resolution" value="2.21 A"/>
    <property type="chains" value="R=1-149"/>
</dbReference>
<dbReference type="PDB" id="7QI5">
    <property type="method" value="EM"/>
    <property type="resolution" value="2.63 A"/>
    <property type="chains" value="R=1-149"/>
</dbReference>
<dbReference type="PDB" id="7QI6">
    <property type="method" value="EM"/>
    <property type="resolution" value="2.98 A"/>
    <property type="chains" value="R=1-149"/>
</dbReference>
<dbReference type="PDB" id="8ANY">
    <property type="method" value="EM"/>
    <property type="resolution" value="2.85 A"/>
    <property type="chains" value="R=1-149"/>
</dbReference>
<dbReference type="PDB" id="8K2A">
    <property type="method" value="EM"/>
    <property type="resolution" value="2.90 A"/>
    <property type="chains" value="LT=1-149"/>
</dbReference>
<dbReference type="PDB" id="8K2B">
    <property type="method" value="EM"/>
    <property type="resolution" value="3.40 A"/>
    <property type="chains" value="LT=1-149"/>
</dbReference>
<dbReference type="PDB" id="8OIR">
    <property type="method" value="EM"/>
    <property type="resolution" value="3.10 A"/>
    <property type="chains" value="BY=1-149"/>
</dbReference>
<dbReference type="PDB" id="8OIT">
    <property type="method" value="EM"/>
    <property type="resolution" value="2.90 A"/>
    <property type="chains" value="BY=1-149"/>
</dbReference>
<dbReference type="PDB" id="8PK0">
    <property type="method" value="EM"/>
    <property type="resolution" value="3.03 A"/>
    <property type="chains" value="R=1-149"/>
</dbReference>
<dbReference type="PDB" id="8QSJ">
    <property type="method" value="EM"/>
    <property type="resolution" value="3.00 A"/>
    <property type="chains" value="R=1-149"/>
</dbReference>
<dbReference type="PDB" id="8QU1">
    <property type="method" value="EM"/>
    <property type="resolution" value="2.74 A"/>
    <property type="chains" value="R=1-149"/>
</dbReference>
<dbReference type="PDB" id="8QU5">
    <property type="method" value="EM"/>
    <property type="resolution" value="2.42 A"/>
    <property type="chains" value="R=1-149"/>
</dbReference>
<dbReference type="PDB" id="8RRI">
    <property type="method" value="EM"/>
    <property type="resolution" value="2.40 A"/>
    <property type="chains" value="R=1-149"/>
</dbReference>
<dbReference type="PDB" id="8XT0">
    <property type="method" value="EM"/>
    <property type="resolution" value="3.20 A"/>
    <property type="chains" value="LT=1-149"/>
</dbReference>
<dbReference type="PDB" id="8XT1">
    <property type="method" value="EM"/>
    <property type="resolution" value="3.10 A"/>
    <property type="chains" value="LT=1-149"/>
</dbReference>
<dbReference type="PDB" id="8XT2">
    <property type="method" value="EM"/>
    <property type="resolution" value="3.30 A"/>
    <property type="chains" value="LT=1-149"/>
</dbReference>
<dbReference type="PDB" id="8XT3">
    <property type="method" value="EM"/>
    <property type="resolution" value="3.10 A"/>
    <property type="chains" value="LT=1-149"/>
</dbReference>
<dbReference type="PDBsum" id="3J7Y"/>
<dbReference type="PDBsum" id="3J9M"/>
<dbReference type="PDBsum" id="5OOL"/>
<dbReference type="PDBsum" id="5OOM"/>
<dbReference type="PDBsum" id="6I9R"/>
<dbReference type="PDBsum" id="6NU2"/>
<dbReference type="PDBsum" id="6NU3"/>
<dbReference type="PDBsum" id="6VLZ"/>
<dbReference type="PDBsum" id="6VMI"/>
<dbReference type="PDBsum" id="6ZM5"/>
<dbReference type="PDBsum" id="6ZM6"/>
<dbReference type="PDBsum" id="6ZS9"/>
<dbReference type="PDBsum" id="6ZSA"/>
<dbReference type="PDBsum" id="6ZSB"/>
<dbReference type="PDBsum" id="6ZSC"/>
<dbReference type="PDBsum" id="6ZSD"/>
<dbReference type="PDBsum" id="6ZSE"/>
<dbReference type="PDBsum" id="6ZSG"/>
<dbReference type="PDBsum" id="7A5F"/>
<dbReference type="PDBsum" id="7A5G"/>
<dbReference type="PDBsum" id="7A5H"/>
<dbReference type="PDBsum" id="7A5I"/>
<dbReference type="PDBsum" id="7A5J"/>
<dbReference type="PDBsum" id="7A5K"/>
<dbReference type="PDBsum" id="7L08"/>
<dbReference type="PDBsum" id="7L20"/>
<dbReference type="PDBsum" id="7O9K"/>
<dbReference type="PDBsum" id="7O9M"/>
<dbReference type="PDBsum" id="7ODR"/>
<dbReference type="PDBsum" id="7ODS"/>
<dbReference type="PDBsum" id="7ODT"/>
<dbReference type="PDBsum" id="7OF0"/>
<dbReference type="PDBsum" id="7OF2"/>
<dbReference type="PDBsum" id="7OF3"/>
<dbReference type="PDBsum" id="7OF4"/>
<dbReference type="PDBsum" id="7OF5"/>
<dbReference type="PDBsum" id="7OF6"/>
<dbReference type="PDBsum" id="7OF7"/>
<dbReference type="PDBsum" id="7OG4"/>
<dbReference type="PDBsum" id="7OI6"/>
<dbReference type="PDBsum" id="7OI7"/>
<dbReference type="PDBsum" id="7OI8"/>
<dbReference type="PDBsum" id="7OI9"/>
<dbReference type="PDBsum" id="7OIA"/>
<dbReference type="PDBsum" id="7OIB"/>
<dbReference type="PDBsum" id="7OIC"/>
<dbReference type="PDBsum" id="7OID"/>
<dbReference type="PDBsum" id="7OIE"/>
<dbReference type="PDBsum" id="7PD3"/>
<dbReference type="PDBsum" id="7PO4"/>
<dbReference type="PDBsum" id="7QH6"/>
<dbReference type="PDBsum" id="7QH7"/>
<dbReference type="PDBsum" id="7QI4"/>
<dbReference type="PDBsum" id="7QI5"/>
<dbReference type="PDBsum" id="7QI6"/>
<dbReference type="PDBsum" id="8ANY"/>
<dbReference type="PDBsum" id="8K2A"/>
<dbReference type="PDBsum" id="8K2B"/>
<dbReference type="PDBsum" id="8OIR"/>
<dbReference type="PDBsum" id="8OIT"/>
<dbReference type="PDBsum" id="8PK0"/>
<dbReference type="PDBsum" id="8QSJ"/>
<dbReference type="PDBsum" id="8QU1"/>
<dbReference type="PDBsum" id="8QU5"/>
<dbReference type="PDBsum" id="8RRI"/>
<dbReference type="PDBsum" id="8XT0"/>
<dbReference type="PDBsum" id="8XT1"/>
<dbReference type="PDBsum" id="8XT2"/>
<dbReference type="PDBsum" id="8XT3"/>
<dbReference type="EMDB" id="EMD-0514"/>
<dbReference type="EMDB" id="EMD-0515"/>
<dbReference type="EMDB" id="EMD-11278"/>
<dbReference type="EMDB" id="EMD-11279"/>
<dbReference type="EMDB" id="EMD-11390"/>
<dbReference type="EMDB" id="EMD-11391"/>
<dbReference type="EMDB" id="EMD-11392"/>
<dbReference type="EMDB" id="EMD-11393"/>
<dbReference type="EMDB" id="EMD-11394"/>
<dbReference type="EMDB" id="EMD-11395"/>
<dbReference type="EMDB" id="EMD-11397"/>
<dbReference type="EMDB" id="EMD-11641"/>
<dbReference type="EMDB" id="EMD-11642"/>
<dbReference type="EMDB" id="EMD-11643"/>
<dbReference type="EMDB" id="EMD-11644"/>
<dbReference type="EMDB" id="EMD-11645"/>
<dbReference type="EMDB" id="EMD-11646"/>
<dbReference type="EMDB" id="EMD-12763"/>
<dbReference type="EMDB" id="EMD-12764"/>
<dbReference type="EMDB" id="EMD-12845"/>
<dbReference type="EMDB" id="EMD-12846"/>
<dbReference type="EMDB" id="EMD-12847"/>
<dbReference type="EMDB" id="EMD-12865"/>
<dbReference type="EMDB" id="EMD-12867"/>
<dbReference type="EMDB" id="EMD-12868"/>
<dbReference type="EMDB" id="EMD-12869"/>
<dbReference type="EMDB" id="EMD-12870"/>
<dbReference type="EMDB" id="EMD-12871"/>
<dbReference type="EMDB" id="EMD-12872"/>
<dbReference type="EMDB" id="EMD-12877"/>
<dbReference type="EMDB" id="EMD-12919"/>
<dbReference type="EMDB" id="EMD-12920"/>
<dbReference type="EMDB" id="EMD-12921"/>
<dbReference type="EMDB" id="EMD-12922"/>
<dbReference type="EMDB" id="EMD-12923"/>
<dbReference type="EMDB" id="EMD-12924"/>
<dbReference type="EMDB" id="EMD-12925"/>
<dbReference type="EMDB" id="EMD-12926"/>
<dbReference type="EMDB" id="EMD-12927"/>
<dbReference type="EMDB" id="EMD-13329"/>
<dbReference type="EMDB" id="EMD-13562"/>
<dbReference type="EMDB" id="EMD-13965"/>
<dbReference type="EMDB" id="EMD-13967"/>
<dbReference type="EMDB" id="EMD-13980"/>
<dbReference type="EMDB" id="EMD-13981"/>
<dbReference type="EMDB" id="EMD-13982"/>
<dbReference type="EMDB" id="EMD-15544"/>
<dbReference type="EMDB" id="EMD-16897"/>
<dbReference type="EMDB" id="EMD-16899"/>
<dbReference type="EMDB" id="EMD-17719"/>
<dbReference type="EMDB" id="EMD-19460"/>
<dbReference type="EMDB" id="EMD-21233"/>
<dbReference type="EMDB" id="EMD-21242"/>
<dbReference type="EMDB" id="EMD-23096"/>
<dbReference type="EMDB" id="EMD-23121"/>
<dbReference type="EMDB" id="EMD-36836"/>
<dbReference type="EMDB" id="EMD-36837"/>
<dbReference type="EMDB" id="EMD-3842"/>
<dbReference type="EMDB" id="EMD-3843"/>
<dbReference type="EMDB" id="EMD-38632"/>
<dbReference type="EMDB" id="EMD-38633"/>
<dbReference type="EMDB" id="EMD-38634"/>
<dbReference type="EMDB" id="EMD-38635"/>
<dbReference type="EMDB" id="EMD-4434"/>
<dbReference type="SMR" id="Q9BYC9"/>
<dbReference type="BioGRID" id="120374">
    <property type="interactions" value="185"/>
</dbReference>
<dbReference type="ComplexPortal" id="CPX-5226">
    <property type="entry name" value="39S mitochondrial large ribosomal subunit"/>
</dbReference>
<dbReference type="CORUM" id="Q9BYC9"/>
<dbReference type="FunCoup" id="Q9BYC9">
    <property type="interactions" value="1189"/>
</dbReference>
<dbReference type="IntAct" id="Q9BYC9">
    <property type="interactions" value="85"/>
</dbReference>
<dbReference type="MINT" id="Q9BYC9"/>
<dbReference type="STRING" id="9606.ENSP00000341082"/>
<dbReference type="iPTMnet" id="Q9BYC9"/>
<dbReference type="PhosphoSitePlus" id="Q9BYC9"/>
<dbReference type="SwissPalm" id="Q9BYC9"/>
<dbReference type="BioMuta" id="MRPL20"/>
<dbReference type="DMDM" id="74752447"/>
<dbReference type="jPOST" id="Q9BYC9"/>
<dbReference type="MassIVE" id="Q9BYC9"/>
<dbReference type="PaxDb" id="9606-ENSP00000341082"/>
<dbReference type="PeptideAtlas" id="Q9BYC9"/>
<dbReference type="ProteomicsDB" id="6831"/>
<dbReference type="ProteomicsDB" id="79614">
    <molecule id="Q9BYC9-1"/>
</dbReference>
<dbReference type="Pumba" id="Q9BYC9"/>
<dbReference type="Antibodypedia" id="51971">
    <property type="antibodies" value="82 antibodies from 19 providers"/>
</dbReference>
<dbReference type="DNASU" id="55052"/>
<dbReference type="Ensembl" id="ENST00000344843.12">
    <molecule id="Q9BYC9-1"/>
    <property type="protein sequence ID" value="ENSP00000341082.7"/>
    <property type="gene ID" value="ENSG00000242485.6"/>
</dbReference>
<dbReference type="Ensembl" id="ENST00000482352.1">
    <molecule id="Q9BYC9-2"/>
    <property type="protein sequence ID" value="ENSP00000460924.1"/>
    <property type="gene ID" value="ENSG00000242485.6"/>
</dbReference>
<dbReference type="GeneID" id="55052"/>
<dbReference type="KEGG" id="hsa:55052"/>
<dbReference type="MANE-Select" id="ENST00000344843.12">
    <property type="protein sequence ID" value="ENSP00000341082.7"/>
    <property type="RefSeq nucleotide sequence ID" value="NM_017971.4"/>
    <property type="RefSeq protein sequence ID" value="NP_060441.2"/>
</dbReference>
<dbReference type="UCSC" id="uc001afo.5">
    <molecule id="Q9BYC9-1"/>
    <property type="organism name" value="human"/>
</dbReference>
<dbReference type="AGR" id="HGNC:14478"/>
<dbReference type="CTD" id="55052"/>
<dbReference type="DisGeNET" id="55052"/>
<dbReference type="GeneCards" id="MRPL20"/>
<dbReference type="HGNC" id="HGNC:14478">
    <property type="gene designation" value="MRPL20"/>
</dbReference>
<dbReference type="HPA" id="ENSG00000242485">
    <property type="expression patterns" value="Low tissue specificity"/>
</dbReference>
<dbReference type="MIM" id="611833">
    <property type="type" value="gene"/>
</dbReference>
<dbReference type="neXtProt" id="NX_Q9BYC9"/>
<dbReference type="OpenTargets" id="ENSG00000242485"/>
<dbReference type="PharmGKB" id="PA30950"/>
<dbReference type="VEuPathDB" id="HostDB:ENSG00000242485"/>
<dbReference type="eggNOG" id="KOG4707">
    <property type="taxonomic scope" value="Eukaryota"/>
</dbReference>
<dbReference type="GeneTree" id="ENSGT00390000015823"/>
<dbReference type="HOGENOM" id="CLU_123265_1_1_1"/>
<dbReference type="InParanoid" id="Q9BYC9"/>
<dbReference type="OMA" id="GRRKNVW"/>
<dbReference type="OrthoDB" id="10251781at2759"/>
<dbReference type="PAN-GO" id="Q9BYC9">
    <property type="GO annotations" value="2 GO annotations based on evolutionary models"/>
</dbReference>
<dbReference type="PhylomeDB" id="Q9BYC9"/>
<dbReference type="TreeFam" id="TF324702"/>
<dbReference type="PathwayCommons" id="Q9BYC9"/>
<dbReference type="Reactome" id="R-HSA-5368286">
    <property type="pathway name" value="Mitochondrial translation initiation"/>
</dbReference>
<dbReference type="Reactome" id="R-HSA-5389840">
    <property type="pathway name" value="Mitochondrial translation elongation"/>
</dbReference>
<dbReference type="Reactome" id="R-HSA-5419276">
    <property type="pathway name" value="Mitochondrial translation termination"/>
</dbReference>
<dbReference type="SignaLink" id="Q9BYC9"/>
<dbReference type="SIGNOR" id="Q9BYC9"/>
<dbReference type="BioGRID-ORCS" id="55052">
    <property type="hits" value="324 hits in 1161 CRISPR screens"/>
</dbReference>
<dbReference type="CD-CODE" id="91857CE7">
    <property type="entry name" value="Nucleolus"/>
</dbReference>
<dbReference type="ChiTaRS" id="MRPL20">
    <property type="organism name" value="human"/>
</dbReference>
<dbReference type="GeneWiki" id="MRPL20"/>
<dbReference type="GenomeRNAi" id="55052"/>
<dbReference type="Pharos" id="Q9BYC9">
    <property type="development level" value="Tdark"/>
</dbReference>
<dbReference type="PRO" id="PR:Q9BYC9"/>
<dbReference type="Proteomes" id="UP000005640">
    <property type="component" value="Chromosome 1"/>
</dbReference>
<dbReference type="RNAct" id="Q9BYC9">
    <property type="molecule type" value="protein"/>
</dbReference>
<dbReference type="Bgee" id="ENSG00000242485">
    <property type="expression patterns" value="Expressed in palpebral conjunctiva and 207 other cell types or tissues"/>
</dbReference>
<dbReference type="ExpressionAtlas" id="Q9BYC9">
    <property type="expression patterns" value="baseline and differential"/>
</dbReference>
<dbReference type="GO" id="GO:0005743">
    <property type="term" value="C:mitochondrial inner membrane"/>
    <property type="evidence" value="ECO:0000304"/>
    <property type="project" value="Reactome"/>
</dbReference>
<dbReference type="GO" id="GO:0005762">
    <property type="term" value="C:mitochondrial large ribosomal subunit"/>
    <property type="evidence" value="ECO:0000314"/>
    <property type="project" value="UniProtKB"/>
</dbReference>
<dbReference type="GO" id="GO:0005761">
    <property type="term" value="C:mitochondrial ribosome"/>
    <property type="evidence" value="ECO:0000314"/>
    <property type="project" value="UniProtKB"/>
</dbReference>
<dbReference type="GO" id="GO:0005739">
    <property type="term" value="C:mitochondrion"/>
    <property type="evidence" value="ECO:0000314"/>
    <property type="project" value="HPA"/>
</dbReference>
<dbReference type="GO" id="GO:0003723">
    <property type="term" value="F:RNA binding"/>
    <property type="evidence" value="ECO:0007005"/>
    <property type="project" value="UniProtKB"/>
</dbReference>
<dbReference type="GO" id="GO:0019843">
    <property type="term" value="F:rRNA binding"/>
    <property type="evidence" value="ECO:0007669"/>
    <property type="project" value="InterPro"/>
</dbReference>
<dbReference type="GO" id="GO:0003735">
    <property type="term" value="F:structural constituent of ribosome"/>
    <property type="evidence" value="ECO:0000318"/>
    <property type="project" value="GO_Central"/>
</dbReference>
<dbReference type="GO" id="GO:0032543">
    <property type="term" value="P:mitochondrial translation"/>
    <property type="evidence" value="ECO:0000303"/>
    <property type="project" value="ComplexPortal"/>
</dbReference>
<dbReference type="CDD" id="cd07026">
    <property type="entry name" value="Ribosomal_L20"/>
    <property type="match status" value="1"/>
</dbReference>
<dbReference type="FunFam" id="1.10.1900.20:FF:000001">
    <property type="entry name" value="50S ribosomal protein L20"/>
    <property type="match status" value="1"/>
</dbReference>
<dbReference type="Gene3D" id="1.10.1900.20">
    <property type="entry name" value="Ribosomal protein L20"/>
    <property type="match status" value="1"/>
</dbReference>
<dbReference type="InterPro" id="IPR005813">
    <property type="entry name" value="Ribosomal_bL20"/>
</dbReference>
<dbReference type="InterPro" id="IPR035566">
    <property type="entry name" value="Ribosomal_protein_bL20_C"/>
</dbReference>
<dbReference type="NCBIfam" id="TIGR01032">
    <property type="entry name" value="rplT_bact"/>
    <property type="match status" value="1"/>
</dbReference>
<dbReference type="PANTHER" id="PTHR10986">
    <property type="entry name" value="39S RIBOSOMAL PROTEIN L20"/>
    <property type="match status" value="1"/>
</dbReference>
<dbReference type="Pfam" id="PF00453">
    <property type="entry name" value="Ribosomal_L20"/>
    <property type="match status" value="1"/>
</dbReference>
<dbReference type="PRINTS" id="PR00062">
    <property type="entry name" value="RIBOSOMALL20"/>
</dbReference>
<dbReference type="SUPFAM" id="SSF74731">
    <property type="entry name" value="Ribosomal protein L20"/>
    <property type="match status" value="1"/>
</dbReference>
<accession>Q9BYC9</accession>
<accession>B2RE41</accession>
<accession>B7Z746</accession>
<name>RM20_HUMAN</name>